<evidence type="ECO:0000250" key="1"/>
<evidence type="ECO:0000256" key="2">
    <source>
        <dbReference type="SAM" id="MobiDB-lite"/>
    </source>
</evidence>
<evidence type="ECO:0000305" key="3"/>
<dbReference type="EC" id="3.1.22.-"/>
<dbReference type="EMBL" id="CR382139">
    <property type="protein sequence ID" value="CAG90230.2"/>
    <property type="molecule type" value="Genomic_DNA"/>
</dbReference>
<dbReference type="RefSeq" id="XP_461773.2">
    <property type="nucleotide sequence ID" value="XM_461773.1"/>
</dbReference>
<dbReference type="SMR" id="Q6BJ48"/>
<dbReference type="FunCoup" id="Q6BJ48">
    <property type="interactions" value="211"/>
</dbReference>
<dbReference type="STRING" id="284592.Q6BJ48"/>
<dbReference type="GeneID" id="2904649"/>
<dbReference type="KEGG" id="dha:DEHA2G05214g"/>
<dbReference type="VEuPathDB" id="FungiDB:DEHA2G05214g"/>
<dbReference type="eggNOG" id="KOG2379">
    <property type="taxonomic scope" value="Eukaryota"/>
</dbReference>
<dbReference type="HOGENOM" id="CLU_014329_1_0_1"/>
<dbReference type="InParanoid" id="Q6BJ48"/>
<dbReference type="OMA" id="ELGDAMW"/>
<dbReference type="OrthoDB" id="5963188at2759"/>
<dbReference type="Proteomes" id="UP000000599">
    <property type="component" value="Chromosome G"/>
</dbReference>
<dbReference type="GO" id="GO:0048476">
    <property type="term" value="C:Holliday junction resolvase complex"/>
    <property type="evidence" value="ECO:0007669"/>
    <property type="project" value="EnsemblFungi"/>
</dbReference>
<dbReference type="GO" id="GO:0005634">
    <property type="term" value="C:nucleus"/>
    <property type="evidence" value="ECO:0007669"/>
    <property type="project" value="UniProtKB-SubCell"/>
</dbReference>
<dbReference type="GO" id="GO:0048257">
    <property type="term" value="F:3'-flap endonuclease activity"/>
    <property type="evidence" value="ECO:0007669"/>
    <property type="project" value="TreeGrafter"/>
</dbReference>
<dbReference type="GO" id="GO:0008821">
    <property type="term" value="F:crossover junction DNA endonuclease activity"/>
    <property type="evidence" value="ECO:0007669"/>
    <property type="project" value="EnsemblFungi"/>
</dbReference>
<dbReference type="GO" id="GO:0003677">
    <property type="term" value="F:DNA binding"/>
    <property type="evidence" value="ECO:0007669"/>
    <property type="project" value="InterPro"/>
</dbReference>
<dbReference type="GO" id="GO:0004857">
    <property type="term" value="F:enzyme inhibitor activity"/>
    <property type="evidence" value="ECO:0007669"/>
    <property type="project" value="EnsemblFungi"/>
</dbReference>
<dbReference type="GO" id="GO:0046872">
    <property type="term" value="F:metal ion binding"/>
    <property type="evidence" value="ECO:0007669"/>
    <property type="project" value="UniProtKB-KW"/>
</dbReference>
<dbReference type="GO" id="GO:0006308">
    <property type="term" value="P:DNA catabolic process"/>
    <property type="evidence" value="ECO:0007669"/>
    <property type="project" value="InterPro"/>
</dbReference>
<dbReference type="GO" id="GO:0006265">
    <property type="term" value="P:DNA topological change"/>
    <property type="evidence" value="ECO:0007669"/>
    <property type="project" value="EnsemblFungi"/>
</dbReference>
<dbReference type="GO" id="GO:0000727">
    <property type="term" value="P:double-strand break repair via break-induced replication"/>
    <property type="evidence" value="ECO:0007669"/>
    <property type="project" value="EnsemblFungi"/>
</dbReference>
<dbReference type="GO" id="GO:0031573">
    <property type="term" value="P:mitotic intra-S DNA damage checkpoint signaling"/>
    <property type="evidence" value="ECO:0007669"/>
    <property type="project" value="TreeGrafter"/>
</dbReference>
<dbReference type="GO" id="GO:0000712">
    <property type="term" value="P:resolution of meiotic recombination intermediates"/>
    <property type="evidence" value="ECO:0007669"/>
    <property type="project" value="EnsemblFungi"/>
</dbReference>
<dbReference type="CDD" id="cd21036">
    <property type="entry name" value="WH_MUS81"/>
    <property type="match status" value="1"/>
</dbReference>
<dbReference type="CDD" id="cd20074">
    <property type="entry name" value="XPF_nuclease_Mus81"/>
    <property type="match status" value="1"/>
</dbReference>
<dbReference type="FunFam" id="1.10.10.10:FF:000307">
    <property type="entry name" value="Crossover junction endonuclease MUS81"/>
    <property type="match status" value="1"/>
</dbReference>
<dbReference type="FunFam" id="3.40.50.10130:FF:000003">
    <property type="entry name" value="Crossover junction endonuclease MUS81"/>
    <property type="match status" value="1"/>
</dbReference>
<dbReference type="Gene3D" id="3.40.50.10130">
    <property type="match status" value="1"/>
</dbReference>
<dbReference type="Gene3D" id="1.10.150.670">
    <property type="entry name" value="Crossover junction endonuclease EME1, DNA-binding domain"/>
    <property type="match status" value="1"/>
</dbReference>
<dbReference type="Gene3D" id="1.10.150.110">
    <property type="entry name" value="DNA polymerase beta, N-terminal domain-like"/>
    <property type="match status" value="1"/>
</dbReference>
<dbReference type="Gene3D" id="1.10.10.10">
    <property type="entry name" value="Winged helix-like DNA-binding domain superfamily/Winged helix DNA-binding domain"/>
    <property type="match status" value="1"/>
</dbReference>
<dbReference type="InterPro" id="IPR027421">
    <property type="entry name" value="DNA_pol_lamdba_lyase_dom_sf"/>
</dbReference>
<dbReference type="InterPro" id="IPR042530">
    <property type="entry name" value="EME1/EME2_C"/>
</dbReference>
<dbReference type="InterPro" id="IPR006166">
    <property type="entry name" value="ERCC4_domain"/>
</dbReference>
<dbReference type="InterPro" id="IPR033309">
    <property type="entry name" value="Mus81"/>
</dbReference>
<dbReference type="InterPro" id="IPR011335">
    <property type="entry name" value="Restrct_endonuc-II-like"/>
</dbReference>
<dbReference type="InterPro" id="IPR036388">
    <property type="entry name" value="WH-like_DNA-bd_sf"/>
</dbReference>
<dbReference type="InterPro" id="IPR047417">
    <property type="entry name" value="WH_MUS81"/>
</dbReference>
<dbReference type="InterPro" id="IPR047416">
    <property type="entry name" value="XPF_nuclease_Mus81"/>
</dbReference>
<dbReference type="PANTHER" id="PTHR13451">
    <property type="entry name" value="CLASS II CROSSOVER JUNCTION ENDONUCLEASE MUS81"/>
    <property type="match status" value="1"/>
</dbReference>
<dbReference type="PANTHER" id="PTHR13451:SF0">
    <property type="entry name" value="CROSSOVER JUNCTION ENDONUCLEASE MUS81"/>
    <property type="match status" value="1"/>
</dbReference>
<dbReference type="Pfam" id="PF02732">
    <property type="entry name" value="ERCC4"/>
    <property type="match status" value="1"/>
</dbReference>
<dbReference type="Pfam" id="PF21136">
    <property type="entry name" value="MUS81-like_WH"/>
    <property type="match status" value="1"/>
</dbReference>
<dbReference type="SMART" id="SM00891">
    <property type="entry name" value="ERCC4"/>
    <property type="match status" value="1"/>
</dbReference>
<dbReference type="SUPFAM" id="SSF47802">
    <property type="entry name" value="DNA polymerase beta, N-terminal domain-like"/>
    <property type="match status" value="1"/>
</dbReference>
<dbReference type="SUPFAM" id="SSF52980">
    <property type="entry name" value="Restriction endonuclease-like"/>
    <property type="match status" value="1"/>
</dbReference>
<proteinExistence type="inferred from homology"/>
<gene>
    <name type="primary">MUS81</name>
    <name type="ordered locus">DEHA2G05214g</name>
</gene>
<protein>
    <recommendedName>
        <fullName>Crossover junction endonuclease MUS81</fullName>
        <ecNumber>3.1.22.-</ecNumber>
    </recommendedName>
</protein>
<name>MUS81_DEBHA</name>
<feature type="chain" id="PRO_0000223642" description="Crossover junction endonuclease MUS81">
    <location>
        <begin position="1"/>
        <end position="651"/>
    </location>
</feature>
<feature type="domain" description="ERCC4">
    <location>
        <begin position="361"/>
        <end position="458"/>
    </location>
</feature>
<feature type="region of interest" description="Disordered" evidence="2">
    <location>
        <begin position="99"/>
        <end position="124"/>
    </location>
</feature>
<feature type="compositionally biased region" description="Basic residues" evidence="2">
    <location>
        <begin position="115"/>
        <end position="124"/>
    </location>
</feature>
<reference key="1">
    <citation type="journal article" date="2004" name="Nature">
        <title>Genome evolution in yeasts.</title>
        <authorList>
            <person name="Dujon B."/>
            <person name="Sherman D."/>
            <person name="Fischer G."/>
            <person name="Durrens P."/>
            <person name="Casaregola S."/>
            <person name="Lafontaine I."/>
            <person name="de Montigny J."/>
            <person name="Marck C."/>
            <person name="Neuveglise C."/>
            <person name="Talla E."/>
            <person name="Goffard N."/>
            <person name="Frangeul L."/>
            <person name="Aigle M."/>
            <person name="Anthouard V."/>
            <person name="Babour A."/>
            <person name="Barbe V."/>
            <person name="Barnay S."/>
            <person name="Blanchin S."/>
            <person name="Beckerich J.-M."/>
            <person name="Beyne E."/>
            <person name="Bleykasten C."/>
            <person name="Boisrame A."/>
            <person name="Boyer J."/>
            <person name="Cattolico L."/>
            <person name="Confanioleri F."/>
            <person name="de Daruvar A."/>
            <person name="Despons L."/>
            <person name="Fabre E."/>
            <person name="Fairhead C."/>
            <person name="Ferry-Dumazet H."/>
            <person name="Groppi A."/>
            <person name="Hantraye F."/>
            <person name="Hennequin C."/>
            <person name="Jauniaux N."/>
            <person name="Joyet P."/>
            <person name="Kachouri R."/>
            <person name="Kerrest A."/>
            <person name="Koszul R."/>
            <person name="Lemaire M."/>
            <person name="Lesur I."/>
            <person name="Ma L."/>
            <person name="Muller H."/>
            <person name="Nicaud J.-M."/>
            <person name="Nikolski M."/>
            <person name="Oztas S."/>
            <person name="Ozier-Kalogeropoulos O."/>
            <person name="Pellenz S."/>
            <person name="Potier S."/>
            <person name="Richard G.-F."/>
            <person name="Straub M.-L."/>
            <person name="Suleau A."/>
            <person name="Swennen D."/>
            <person name="Tekaia F."/>
            <person name="Wesolowski-Louvel M."/>
            <person name="Westhof E."/>
            <person name="Wirth B."/>
            <person name="Zeniou-Meyer M."/>
            <person name="Zivanovic Y."/>
            <person name="Bolotin-Fukuhara M."/>
            <person name="Thierry A."/>
            <person name="Bouchier C."/>
            <person name="Caudron B."/>
            <person name="Scarpelli C."/>
            <person name="Gaillardin C."/>
            <person name="Weissenbach J."/>
            <person name="Wincker P."/>
            <person name="Souciet J.-L."/>
        </authorList>
    </citation>
    <scope>NUCLEOTIDE SEQUENCE [LARGE SCALE GENOMIC DNA]</scope>
    <source>
        <strain>ATCC 36239 / CBS 767 / BCRC 21394 / JCM 1990 / NBRC 0083 / IGC 2968</strain>
    </source>
</reference>
<sequence length="651" mass="74151">MEGPPGDLKHLFIEWLQEAAINATKKGTKAAILYNKALGSVRNYPLPINDPKTLKSVQFVGDKTCIHLSKKLEEYCKLNNFELPVAFGGLINGGVGEKRKHEVSDTSNLPDAKPKKQRKQKQYIPRKRSGGYAILLALYFGDKKKTGLTKEEIIQRATPYSDKSFKSNPSANEFYSAWSSIKSLQTHDLVDSSGRSSKSYFLTEEGYELAKQLKDAEGFESSPITNHIADLSFDNQVRVTPDSSYSKISQQLDSSPLMKTKNNKDRYGLGPSRLSSTRERILDLSSSPRLISSPLKPKDFVLRESLSSHNSTRPLQDRESISKAEDGINTKTKARLVHDASKRIYDGTNYDIWVPGEFEIILIIDNREIRSQRDRDFFQTRLTSLKVECDVRPLSVGDVVWTAKHKKTGREVILNYICERKRLDDLVSSIKDGRFQEQKNRLKKSGMKQFYYLVEDVVTSDMNKFGDMSDAIQTAMSMTMTISNFYLKRFKSIEDTIAFLASLTQVIKDQFAKNKTNLLVLKARSIKNQAEYSSLIAKFKEKFENRSTSYECAHLFSTFQDSMGKTGMMTVKETFILMLMGIRGVSLERAVAIQNRFKTPKNLIEFFFVENNHLSELDKKQLMMDVFKNEIGNKKIGKVLSEKIYDVWGCV</sequence>
<comment type="function">
    <text evidence="1">Interacts with EME1 to form a DNA structure-specific endonuclease with substrate preference for branched DNA structures with a 5'-end at the branch nick. Typical substrates include 3'-flap structures, D-loops, replication forks and nicked Holliday junctions. May be required in mitosis for the processing of stalled or collapsed replication fork intermediates. May be required in meiosis for the repair of meiosis-specific double strand breaks subsequent to single-end invasion (SEI) (By similarity).</text>
</comment>
<comment type="cofactor">
    <cofactor evidence="1">
        <name>Mg(2+)</name>
        <dbReference type="ChEBI" id="CHEBI:18420"/>
    </cofactor>
</comment>
<comment type="subunit">
    <text evidence="1">Interacts with EME1.</text>
</comment>
<comment type="subcellular location">
    <subcellularLocation>
        <location evidence="1">Nucleus</location>
    </subcellularLocation>
</comment>
<comment type="similarity">
    <text evidence="3">Belongs to the XPF family.</text>
</comment>
<organism>
    <name type="scientific">Debaryomyces hansenii (strain ATCC 36239 / CBS 767 / BCRC 21394 / JCM 1990 / NBRC 0083 / IGC 2968)</name>
    <name type="common">Yeast</name>
    <name type="synonym">Torulaspora hansenii</name>
    <dbReference type="NCBI Taxonomy" id="284592"/>
    <lineage>
        <taxon>Eukaryota</taxon>
        <taxon>Fungi</taxon>
        <taxon>Dikarya</taxon>
        <taxon>Ascomycota</taxon>
        <taxon>Saccharomycotina</taxon>
        <taxon>Pichiomycetes</taxon>
        <taxon>Debaryomycetaceae</taxon>
        <taxon>Debaryomyces</taxon>
    </lineage>
</organism>
<accession>Q6BJ48</accession>
<keyword id="KW-0227">DNA damage</keyword>
<keyword id="KW-0233">DNA recombination</keyword>
<keyword id="KW-0234">DNA repair</keyword>
<keyword id="KW-0255">Endonuclease</keyword>
<keyword id="KW-0378">Hydrolase</keyword>
<keyword id="KW-0460">Magnesium</keyword>
<keyword id="KW-0469">Meiosis</keyword>
<keyword id="KW-0479">Metal-binding</keyword>
<keyword id="KW-0540">Nuclease</keyword>
<keyword id="KW-0539">Nucleus</keyword>
<keyword id="KW-1185">Reference proteome</keyword>